<name>CAB45_BOVIN</name>
<evidence type="ECO:0000250" key="1"/>
<evidence type="ECO:0000250" key="2">
    <source>
        <dbReference type="UniProtKB" id="Q61112"/>
    </source>
</evidence>
<evidence type="ECO:0000250" key="3">
    <source>
        <dbReference type="UniProtKB" id="Q9BRK5"/>
    </source>
</evidence>
<evidence type="ECO:0000255" key="4"/>
<evidence type="ECO:0000255" key="5">
    <source>
        <dbReference type="PROSITE-ProRule" id="PRU00448"/>
    </source>
</evidence>
<evidence type="ECO:0000305" key="6"/>
<protein>
    <recommendedName>
        <fullName>45 kDa calcium-binding protein</fullName>
        <shortName>Cab45</shortName>
    </recommendedName>
    <alternativeName>
        <fullName>Stromal cell-derived factor 4</fullName>
        <shortName>SDF-4</shortName>
    </alternativeName>
</protein>
<comment type="function">
    <text evidence="1">May regulate calcium-dependent activities in the endoplasmic reticulum lumen or post-ER compartment.</text>
</comment>
<comment type="subcellular location">
    <subcellularLocation>
        <location evidence="2">Golgi apparatus lumen</location>
    </subcellularLocation>
</comment>
<comment type="domain">
    <text evidence="1">Binds calcium via its EF-hands.</text>
</comment>
<comment type="similarity">
    <text evidence="6">Belongs to the CREC family.</text>
</comment>
<keyword id="KW-0106">Calcium</keyword>
<keyword id="KW-0325">Glycoprotein</keyword>
<keyword id="KW-0333">Golgi apparatus</keyword>
<keyword id="KW-0479">Metal-binding</keyword>
<keyword id="KW-0597">Phosphoprotein</keyword>
<keyword id="KW-1185">Reference proteome</keyword>
<keyword id="KW-0677">Repeat</keyword>
<keyword id="KW-0732">Signal</keyword>
<feature type="signal peptide" evidence="4">
    <location>
        <begin position="1"/>
        <end position="29"/>
    </location>
</feature>
<feature type="chain" id="PRO_0000377515" description="45 kDa calcium-binding protein">
    <location>
        <begin position="30"/>
        <end position="355"/>
    </location>
</feature>
<feature type="domain" description="EF-hand 1" evidence="5">
    <location>
        <begin position="91"/>
        <end position="126"/>
    </location>
</feature>
<feature type="domain" description="EF-hand 2" evidence="5">
    <location>
        <begin position="130"/>
        <end position="165"/>
    </location>
</feature>
<feature type="domain" description="EF-hand 3" evidence="5">
    <location>
        <begin position="226"/>
        <end position="261"/>
    </location>
</feature>
<feature type="domain" description="EF-hand 4" evidence="5">
    <location>
        <begin position="271"/>
        <end position="306"/>
    </location>
</feature>
<feature type="domain" description="EF-hand 5" evidence="5">
    <location>
        <begin position="307"/>
        <end position="342"/>
    </location>
</feature>
<feature type="region of interest" description="Necessary for intracellular retention in Golgi apparatus lumen" evidence="1">
    <location>
        <begin position="302"/>
        <end position="355"/>
    </location>
</feature>
<feature type="binding site" evidence="5">
    <location>
        <position position="104"/>
    </location>
    <ligand>
        <name>Ca(2+)</name>
        <dbReference type="ChEBI" id="CHEBI:29108"/>
        <label>1</label>
    </ligand>
</feature>
<feature type="binding site" evidence="5">
    <location>
        <position position="106"/>
    </location>
    <ligand>
        <name>Ca(2+)</name>
        <dbReference type="ChEBI" id="CHEBI:29108"/>
        <label>1</label>
    </ligand>
</feature>
<feature type="binding site" evidence="5">
    <location>
        <position position="108"/>
    </location>
    <ligand>
        <name>Ca(2+)</name>
        <dbReference type="ChEBI" id="CHEBI:29108"/>
        <label>1</label>
    </ligand>
</feature>
<feature type="binding site" evidence="5">
    <location>
        <position position="110"/>
    </location>
    <ligand>
        <name>Ca(2+)</name>
        <dbReference type="ChEBI" id="CHEBI:29108"/>
        <label>1</label>
    </ligand>
</feature>
<feature type="binding site" evidence="5">
    <location>
        <position position="115"/>
    </location>
    <ligand>
        <name>Ca(2+)</name>
        <dbReference type="ChEBI" id="CHEBI:29108"/>
        <label>1</label>
    </ligand>
</feature>
<feature type="binding site" evidence="5">
    <location>
        <position position="143"/>
    </location>
    <ligand>
        <name>Ca(2+)</name>
        <dbReference type="ChEBI" id="CHEBI:29108"/>
        <label>2</label>
    </ligand>
</feature>
<feature type="binding site" evidence="5">
    <location>
        <position position="145"/>
    </location>
    <ligand>
        <name>Ca(2+)</name>
        <dbReference type="ChEBI" id="CHEBI:29108"/>
        <label>2</label>
    </ligand>
</feature>
<feature type="binding site" evidence="5">
    <location>
        <position position="147"/>
    </location>
    <ligand>
        <name>Ca(2+)</name>
        <dbReference type="ChEBI" id="CHEBI:29108"/>
        <label>2</label>
    </ligand>
</feature>
<feature type="binding site" evidence="5">
    <location>
        <position position="149"/>
    </location>
    <ligand>
        <name>Ca(2+)</name>
        <dbReference type="ChEBI" id="CHEBI:29108"/>
        <label>2</label>
    </ligand>
</feature>
<feature type="binding site" evidence="5">
    <location>
        <position position="154"/>
    </location>
    <ligand>
        <name>Ca(2+)</name>
        <dbReference type="ChEBI" id="CHEBI:29108"/>
        <label>2</label>
    </ligand>
</feature>
<feature type="binding site" evidence="5">
    <location>
        <position position="239"/>
    </location>
    <ligand>
        <name>Ca(2+)</name>
        <dbReference type="ChEBI" id="CHEBI:29108"/>
        <label>3</label>
    </ligand>
</feature>
<feature type="binding site" evidence="5">
    <location>
        <position position="241"/>
    </location>
    <ligand>
        <name>Ca(2+)</name>
        <dbReference type="ChEBI" id="CHEBI:29108"/>
        <label>3</label>
    </ligand>
</feature>
<feature type="binding site" evidence="5">
    <location>
        <position position="243"/>
    </location>
    <ligand>
        <name>Ca(2+)</name>
        <dbReference type="ChEBI" id="CHEBI:29108"/>
        <label>3</label>
    </ligand>
</feature>
<feature type="binding site" evidence="5">
    <location>
        <position position="245"/>
    </location>
    <ligand>
        <name>Ca(2+)</name>
        <dbReference type="ChEBI" id="CHEBI:29108"/>
        <label>3</label>
    </ligand>
</feature>
<feature type="binding site" evidence="5">
    <location>
        <position position="250"/>
    </location>
    <ligand>
        <name>Ca(2+)</name>
        <dbReference type="ChEBI" id="CHEBI:29108"/>
        <label>3</label>
    </ligand>
</feature>
<feature type="binding site" evidence="5">
    <location>
        <position position="284"/>
    </location>
    <ligand>
        <name>Ca(2+)</name>
        <dbReference type="ChEBI" id="CHEBI:29108"/>
        <label>4</label>
    </ligand>
</feature>
<feature type="binding site" evidence="5">
    <location>
        <position position="286"/>
    </location>
    <ligand>
        <name>Ca(2+)</name>
        <dbReference type="ChEBI" id="CHEBI:29108"/>
        <label>4</label>
    </ligand>
</feature>
<feature type="binding site" evidence="5">
    <location>
        <position position="288"/>
    </location>
    <ligand>
        <name>Ca(2+)</name>
        <dbReference type="ChEBI" id="CHEBI:29108"/>
        <label>4</label>
    </ligand>
</feature>
<feature type="binding site" evidence="5">
    <location>
        <position position="295"/>
    </location>
    <ligand>
        <name>Ca(2+)</name>
        <dbReference type="ChEBI" id="CHEBI:29108"/>
        <label>4</label>
    </ligand>
</feature>
<feature type="binding site" evidence="5">
    <location>
        <position position="320"/>
    </location>
    <ligand>
        <name>Ca(2+)</name>
        <dbReference type="ChEBI" id="CHEBI:29108"/>
        <label>5</label>
    </ligand>
</feature>
<feature type="binding site" evidence="5">
    <location>
        <position position="322"/>
    </location>
    <ligand>
        <name>Ca(2+)</name>
        <dbReference type="ChEBI" id="CHEBI:29108"/>
        <label>5</label>
    </ligand>
</feature>
<feature type="binding site" evidence="5">
    <location>
        <position position="324"/>
    </location>
    <ligand>
        <name>Ca(2+)</name>
        <dbReference type="ChEBI" id="CHEBI:29108"/>
        <label>5</label>
    </ligand>
</feature>
<feature type="binding site" evidence="5">
    <location>
        <position position="326"/>
    </location>
    <ligand>
        <name>Ca(2+)</name>
        <dbReference type="ChEBI" id="CHEBI:29108"/>
        <label>5</label>
    </ligand>
</feature>
<feature type="binding site" evidence="5">
    <location>
        <position position="331"/>
    </location>
    <ligand>
        <name>Ca(2+)</name>
        <dbReference type="ChEBI" id="CHEBI:29108"/>
        <label>5</label>
    </ligand>
</feature>
<feature type="modified residue" description="Phosphoserine" evidence="3">
    <location>
        <position position="92"/>
    </location>
</feature>
<feature type="modified residue" description="Phosphothreonine" evidence="3">
    <location>
        <position position="186"/>
    </location>
</feature>
<feature type="modified residue" description="Phosphothreonine" evidence="3">
    <location>
        <position position="210"/>
    </location>
</feature>
<feature type="modified residue" description="Phosphothreonine" evidence="3">
    <location>
        <position position="258"/>
    </location>
</feature>
<feature type="modified residue" description="Phosphothreonine" evidence="3">
    <location>
        <position position="292"/>
    </location>
</feature>
<feature type="glycosylation site" description="N-linked (GlcNAc...) asparagine" evidence="4">
    <location>
        <position position="33"/>
    </location>
</feature>
<accession>Q3ZBZ1</accession>
<dbReference type="EMBL" id="BC103026">
    <property type="protein sequence ID" value="AAI03027.1"/>
    <property type="molecule type" value="mRNA"/>
</dbReference>
<dbReference type="RefSeq" id="NP_001030452.1">
    <property type="nucleotide sequence ID" value="NM_001035375.1"/>
</dbReference>
<dbReference type="FunCoup" id="Q3ZBZ1">
    <property type="interactions" value="1037"/>
</dbReference>
<dbReference type="STRING" id="9913.ENSBTAP00000020778"/>
<dbReference type="GlyCosmos" id="Q3ZBZ1">
    <property type="glycosylation" value="1 site, No reported glycans"/>
</dbReference>
<dbReference type="GlyGen" id="Q3ZBZ1">
    <property type="glycosylation" value="1 site"/>
</dbReference>
<dbReference type="PaxDb" id="9913-ENSBTAP00000020778"/>
<dbReference type="PeptideAtlas" id="Q3ZBZ1"/>
<dbReference type="GeneID" id="528783"/>
<dbReference type="KEGG" id="bta:528783"/>
<dbReference type="CTD" id="51150"/>
<dbReference type="eggNOG" id="KOG4251">
    <property type="taxonomic scope" value="Eukaryota"/>
</dbReference>
<dbReference type="InParanoid" id="Q3ZBZ1"/>
<dbReference type="OrthoDB" id="9978834at2759"/>
<dbReference type="Proteomes" id="UP000009136">
    <property type="component" value="Unplaced"/>
</dbReference>
<dbReference type="GO" id="GO:0005783">
    <property type="term" value="C:endoplasmic reticulum"/>
    <property type="evidence" value="ECO:0000318"/>
    <property type="project" value="GO_Central"/>
</dbReference>
<dbReference type="GO" id="GO:0005796">
    <property type="term" value="C:Golgi lumen"/>
    <property type="evidence" value="ECO:0007669"/>
    <property type="project" value="UniProtKB-SubCell"/>
</dbReference>
<dbReference type="GO" id="GO:0005509">
    <property type="term" value="F:calcium ion binding"/>
    <property type="evidence" value="ECO:0000318"/>
    <property type="project" value="GO_Central"/>
</dbReference>
<dbReference type="GO" id="GO:0017156">
    <property type="term" value="P:calcium-ion regulated exocytosis"/>
    <property type="evidence" value="ECO:0000318"/>
    <property type="project" value="GO_Central"/>
</dbReference>
<dbReference type="CDD" id="cd16225">
    <property type="entry name" value="EFh_CREC_cab45"/>
    <property type="match status" value="1"/>
</dbReference>
<dbReference type="FunFam" id="1.10.238.10:FF:000120">
    <property type="entry name" value="45 kDa calcium-binding protein"/>
    <property type="match status" value="1"/>
</dbReference>
<dbReference type="FunFam" id="1.10.238.10:FF:000207">
    <property type="entry name" value="Putative 45 kDa calcium-binding protein"/>
    <property type="match status" value="1"/>
</dbReference>
<dbReference type="Gene3D" id="1.10.238.10">
    <property type="entry name" value="EF-hand"/>
    <property type="match status" value="3"/>
</dbReference>
<dbReference type="InterPro" id="IPR027240">
    <property type="entry name" value="CAB45_EFh"/>
</dbReference>
<dbReference type="InterPro" id="IPR011992">
    <property type="entry name" value="EF-hand-dom_pair"/>
</dbReference>
<dbReference type="InterPro" id="IPR018247">
    <property type="entry name" value="EF_Hand_1_Ca_BS"/>
</dbReference>
<dbReference type="InterPro" id="IPR002048">
    <property type="entry name" value="EF_hand_dom"/>
</dbReference>
<dbReference type="PANTHER" id="PTHR10827:SF98">
    <property type="entry name" value="45 KDA CALCIUM-BINDING PROTEIN"/>
    <property type="match status" value="1"/>
</dbReference>
<dbReference type="PANTHER" id="PTHR10827">
    <property type="entry name" value="RETICULOCALBIN"/>
    <property type="match status" value="1"/>
</dbReference>
<dbReference type="Pfam" id="PF13499">
    <property type="entry name" value="EF-hand_7"/>
    <property type="match status" value="1"/>
</dbReference>
<dbReference type="SMART" id="SM00054">
    <property type="entry name" value="EFh"/>
    <property type="match status" value="5"/>
</dbReference>
<dbReference type="SUPFAM" id="SSF47473">
    <property type="entry name" value="EF-hand"/>
    <property type="match status" value="2"/>
</dbReference>
<dbReference type="PROSITE" id="PS00018">
    <property type="entry name" value="EF_HAND_1"/>
    <property type="match status" value="5"/>
</dbReference>
<dbReference type="PROSITE" id="PS50222">
    <property type="entry name" value="EF_HAND_2"/>
    <property type="match status" value="5"/>
</dbReference>
<reference key="1">
    <citation type="submission" date="2005-08" db="EMBL/GenBank/DDBJ databases">
        <authorList>
            <consortium name="NIH - Mammalian Gene Collection (MGC) project"/>
        </authorList>
    </citation>
    <scope>NUCLEOTIDE SEQUENCE [LARGE SCALE MRNA]</scope>
    <source>
        <strain>Crossbred X Angus</strain>
        <tissue>Ileum</tissue>
    </source>
</reference>
<gene>
    <name type="primary">SDF4</name>
    <name type="synonym">CAB45</name>
</gene>
<sequence length="355" mass="41106">MASRQAPLCGLAPCCLWLLGVVLLMNASARPANHSSARERAGNREENEILPPDHLNGVKLEMDGHLNKDFHQEVFLGKDMDDFEEDAEPRKSRRKLMVIFSKVDLNTDRRISAKEMQKWIMQKTAEHFQEAVAESRAHFRAVDPDGDGHVSWDEYKVKFLATKGHNEREVAEKIKNKWDLNIDEETQEVLENLKDRWYQADNPPPDLLLTESEFLSFLHPEHSRGMLQFMVKEIIRDLDQDGDKKLSLSEFISLPVGTVENQQGQDVDDSWVRDRKREFEELIDANHDGIVTMAELEDYMDPMNEFSALNEAKQMIAIADENQNHYLEPEEVLKYSEFFTGSKLVDYARSVHEEF</sequence>
<proteinExistence type="evidence at transcript level"/>
<organism>
    <name type="scientific">Bos taurus</name>
    <name type="common">Bovine</name>
    <dbReference type="NCBI Taxonomy" id="9913"/>
    <lineage>
        <taxon>Eukaryota</taxon>
        <taxon>Metazoa</taxon>
        <taxon>Chordata</taxon>
        <taxon>Craniata</taxon>
        <taxon>Vertebrata</taxon>
        <taxon>Euteleostomi</taxon>
        <taxon>Mammalia</taxon>
        <taxon>Eutheria</taxon>
        <taxon>Laurasiatheria</taxon>
        <taxon>Artiodactyla</taxon>
        <taxon>Ruminantia</taxon>
        <taxon>Pecora</taxon>
        <taxon>Bovidae</taxon>
        <taxon>Bovinae</taxon>
        <taxon>Bos</taxon>
    </lineage>
</organism>